<keyword id="KW-0963">Cytoplasm</keyword>
<keyword id="KW-0223">Dioxygenase</keyword>
<keyword id="KW-0275">Fatty acid biosynthesis</keyword>
<keyword id="KW-0276">Fatty acid metabolism</keyword>
<keyword id="KW-0408">Iron</keyword>
<keyword id="KW-0444">Lipid biosynthesis</keyword>
<keyword id="KW-0443">Lipid metabolism</keyword>
<keyword id="KW-0479">Metal-binding</keyword>
<keyword id="KW-0560">Oxidoreductase</keyword>
<keyword id="KW-0925">Oxylipin biosynthesis</keyword>
<organism>
    <name type="scientific">Pisum sativum</name>
    <name type="common">Garden pea</name>
    <name type="synonym">Lathyrus oleraceus</name>
    <dbReference type="NCBI Taxonomy" id="3888"/>
    <lineage>
        <taxon>Eukaryota</taxon>
        <taxon>Viridiplantae</taxon>
        <taxon>Streptophyta</taxon>
        <taxon>Embryophyta</taxon>
        <taxon>Tracheophyta</taxon>
        <taxon>Spermatophyta</taxon>
        <taxon>Magnoliopsida</taxon>
        <taxon>eudicotyledons</taxon>
        <taxon>Gunneridae</taxon>
        <taxon>Pentapetalae</taxon>
        <taxon>rosids</taxon>
        <taxon>fabids</taxon>
        <taxon>Fabales</taxon>
        <taxon>Fabaceae</taxon>
        <taxon>Papilionoideae</taxon>
        <taxon>50 kb inversion clade</taxon>
        <taxon>NPAAA clade</taxon>
        <taxon>Hologalegina</taxon>
        <taxon>IRL clade</taxon>
        <taxon>Fabeae</taxon>
        <taxon>Pisum</taxon>
    </lineage>
</organism>
<protein>
    <recommendedName>
        <fullName>Seed linoleate 9S-lipoxygenase-2</fullName>
        <ecNumber>1.13.11.58</ecNumber>
    </recommendedName>
    <alternativeName>
        <fullName>Lipoxygenase-2</fullName>
    </alternativeName>
</protein>
<proteinExistence type="evidence at transcript level"/>
<accession>P14856</accession>
<comment type="function">
    <text>Plant lipoxygenase may be involved in a number of diverse aspects of plant physiology including growth and development, pest resistance, and senescence or responses to wounding. It catalyzes the hydroperoxidation of lipids containing a cis,cis-1,4-pentadiene structure.</text>
</comment>
<comment type="catalytic activity">
    <reaction>
        <text>(9Z,12Z)-octadecadienoate + O2 = (9S)-hydroperoxy-(10E,12Z)-octadecadienoate</text>
        <dbReference type="Rhea" id="RHEA:30291"/>
        <dbReference type="ChEBI" id="CHEBI:15379"/>
        <dbReference type="ChEBI" id="CHEBI:30245"/>
        <dbReference type="ChEBI" id="CHEBI:60955"/>
        <dbReference type="EC" id="1.13.11.58"/>
    </reaction>
</comment>
<comment type="cofactor">
    <cofactor evidence="2">
        <name>Fe cation</name>
        <dbReference type="ChEBI" id="CHEBI:24875"/>
    </cofactor>
    <text evidence="2">Binds 1 Fe cation per subunit.</text>
</comment>
<comment type="pathway">
    <text evidence="2">Lipid metabolism; oxylipin biosynthesis.</text>
</comment>
<comment type="subcellular location">
    <subcellularLocation>
        <location>Cytoplasm</location>
    </subcellularLocation>
</comment>
<comment type="similarity">
    <text evidence="4">Belongs to the lipoxygenase family.</text>
</comment>
<dbReference type="EC" id="1.13.11.58"/>
<dbReference type="EMBL" id="X17061">
    <property type="protein sequence ID" value="CAA34906.1"/>
    <property type="molecule type" value="mRNA"/>
</dbReference>
<dbReference type="EMBL" id="X78580">
    <property type="protein sequence ID" value="CAA55318.1"/>
    <property type="molecule type" value="Genomic_DNA"/>
</dbReference>
<dbReference type="PIR" id="S07075">
    <property type="entry name" value="S07075"/>
</dbReference>
<dbReference type="SMR" id="P14856"/>
<dbReference type="BRENDA" id="1.13.11.B6">
    <property type="organism ID" value="4872"/>
</dbReference>
<dbReference type="UniPathway" id="UPA00382"/>
<dbReference type="GO" id="GO:0005737">
    <property type="term" value="C:cytoplasm"/>
    <property type="evidence" value="ECO:0007669"/>
    <property type="project" value="UniProtKB-SubCell"/>
</dbReference>
<dbReference type="GO" id="GO:1990136">
    <property type="term" value="F:linoleate 9S-lipoxygenase activity"/>
    <property type="evidence" value="ECO:0007669"/>
    <property type="project" value="UniProtKB-EC"/>
</dbReference>
<dbReference type="GO" id="GO:0046872">
    <property type="term" value="F:metal ion binding"/>
    <property type="evidence" value="ECO:0007669"/>
    <property type="project" value="UniProtKB-KW"/>
</dbReference>
<dbReference type="GO" id="GO:0006633">
    <property type="term" value="P:fatty acid biosynthetic process"/>
    <property type="evidence" value="ECO:0007669"/>
    <property type="project" value="UniProtKB-KW"/>
</dbReference>
<dbReference type="GO" id="GO:0034440">
    <property type="term" value="P:lipid oxidation"/>
    <property type="evidence" value="ECO:0007669"/>
    <property type="project" value="InterPro"/>
</dbReference>
<dbReference type="GO" id="GO:0031408">
    <property type="term" value="P:oxylipin biosynthetic process"/>
    <property type="evidence" value="ECO:0007669"/>
    <property type="project" value="UniProtKB-UniPathway"/>
</dbReference>
<dbReference type="CDD" id="cd01751">
    <property type="entry name" value="PLAT_LH2"/>
    <property type="match status" value="1"/>
</dbReference>
<dbReference type="FunFam" id="1.20.245.10:FF:000002">
    <property type="entry name" value="Lipoxygenase"/>
    <property type="match status" value="1"/>
</dbReference>
<dbReference type="FunFam" id="3.10.450.60:FF:000002">
    <property type="entry name" value="Lipoxygenase"/>
    <property type="match status" value="1"/>
</dbReference>
<dbReference type="FunFam" id="4.10.375.10:FF:000001">
    <property type="entry name" value="Lipoxygenase"/>
    <property type="match status" value="1"/>
</dbReference>
<dbReference type="Gene3D" id="3.10.450.60">
    <property type="match status" value="1"/>
</dbReference>
<dbReference type="Gene3D" id="4.10.375.10">
    <property type="entry name" value="Lipoxygenase-1, Domain 2"/>
    <property type="match status" value="1"/>
</dbReference>
<dbReference type="Gene3D" id="4.10.372.10">
    <property type="entry name" value="Lipoxygenase-1, Domain 3"/>
    <property type="match status" value="1"/>
</dbReference>
<dbReference type="Gene3D" id="1.20.245.10">
    <property type="entry name" value="Lipoxygenase-1, Domain 5"/>
    <property type="match status" value="1"/>
</dbReference>
<dbReference type="Gene3D" id="2.60.60.20">
    <property type="entry name" value="PLAT/LH2 domain"/>
    <property type="match status" value="1"/>
</dbReference>
<dbReference type="InterPro" id="IPR000907">
    <property type="entry name" value="LipOase"/>
</dbReference>
<dbReference type="InterPro" id="IPR013819">
    <property type="entry name" value="LipOase_C"/>
</dbReference>
<dbReference type="InterPro" id="IPR036226">
    <property type="entry name" value="LipOase_C_sf"/>
</dbReference>
<dbReference type="InterPro" id="IPR020834">
    <property type="entry name" value="LipOase_CS"/>
</dbReference>
<dbReference type="InterPro" id="IPR020833">
    <property type="entry name" value="LipOase_Fe_BS"/>
</dbReference>
<dbReference type="InterPro" id="IPR001246">
    <property type="entry name" value="LipOase_plant"/>
</dbReference>
<dbReference type="InterPro" id="IPR042057">
    <property type="entry name" value="Lipoxy_PLAT/LH2"/>
</dbReference>
<dbReference type="InterPro" id="IPR027433">
    <property type="entry name" value="Lipoxygenase_dom_3"/>
</dbReference>
<dbReference type="InterPro" id="IPR001024">
    <property type="entry name" value="PLAT/LH2_dom"/>
</dbReference>
<dbReference type="InterPro" id="IPR036392">
    <property type="entry name" value="PLAT/LH2_dom_sf"/>
</dbReference>
<dbReference type="PANTHER" id="PTHR11771">
    <property type="entry name" value="LIPOXYGENASE"/>
    <property type="match status" value="1"/>
</dbReference>
<dbReference type="Pfam" id="PF00305">
    <property type="entry name" value="Lipoxygenase"/>
    <property type="match status" value="1"/>
</dbReference>
<dbReference type="Pfam" id="PF01477">
    <property type="entry name" value="PLAT"/>
    <property type="match status" value="1"/>
</dbReference>
<dbReference type="PRINTS" id="PR00087">
    <property type="entry name" value="LIPOXYGENASE"/>
</dbReference>
<dbReference type="PRINTS" id="PR00468">
    <property type="entry name" value="PLTLPOXGNASE"/>
</dbReference>
<dbReference type="SMART" id="SM00308">
    <property type="entry name" value="LH2"/>
    <property type="match status" value="1"/>
</dbReference>
<dbReference type="SUPFAM" id="SSF49723">
    <property type="entry name" value="Lipase/lipooxygenase domain (PLAT/LH2 domain)"/>
    <property type="match status" value="1"/>
</dbReference>
<dbReference type="SUPFAM" id="SSF48484">
    <property type="entry name" value="Lipoxigenase"/>
    <property type="match status" value="1"/>
</dbReference>
<dbReference type="PROSITE" id="PS00711">
    <property type="entry name" value="LIPOXYGENASE_1"/>
    <property type="match status" value="1"/>
</dbReference>
<dbReference type="PROSITE" id="PS00081">
    <property type="entry name" value="LIPOXYGENASE_2"/>
    <property type="match status" value="1"/>
</dbReference>
<dbReference type="PROSITE" id="PS51393">
    <property type="entry name" value="LIPOXYGENASE_3"/>
    <property type="match status" value="1"/>
</dbReference>
<dbReference type="PROSITE" id="PS50095">
    <property type="entry name" value="PLAT"/>
    <property type="match status" value="1"/>
</dbReference>
<evidence type="ECO:0000255" key="1">
    <source>
        <dbReference type="PROSITE-ProRule" id="PRU00152"/>
    </source>
</evidence>
<evidence type="ECO:0000255" key="2">
    <source>
        <dbReference type="PROSITE-ProRule" id="PRU00726"/>
    </source>
</evidence>
<evidence type="ECO:0000256" key="3">
    <source>
        <dbReference type="SAM" id="MobiDB-lite"/>
    </source>
</evidence>
<evidence type="ECO:0000305" key="4"/>
<name>LOX2_PEA</name>
<gene>
    <name type="primary">LOX1.2</name>
</gene>
<sequence>MFPNVTGLLNKGHKIRGTVVLMRKNVLDFNTIVSIGGGNVHGVIDSGINIIGSTLDGLTAFLGRSVSLQLISATKSDANGKGKVGKDTFLEGVLASLPTLGAGESAFNIHFEWDHEMGIPGAFYIKNYMQVEFFLKSLTLEDVPNHGTIRFVCNSWVYNSKLYKSPRIFFANKSYLPSETPSPLVKYREEELQTLRGDGTGERKLHERIYDYDVYNDLGNPDHGEHLARPILGGSSTHPYPRRGRTGRYPTRKDPNSEKPATETYVPRDENFGHLKSSDFLAYGIKSVSQCVVPAFESAFDLNFTPNEFDSFQDVRNLFEGGIKLPLDVISTLSPLPVVKEIFRTDGEQVLKFTPPHVIRVSKSAWMTDEEFAREMLAGVNPCMIRGLQEFPPKSNLDPAEYGDHTSKISVDVLNLDGCTIDEALASGRLFILDYHDTFIPFLRRINETSAKAYATRTILFLKENGTLKPVAIELSLPHPDGDKSGFVSKVILPADEGVESTIWLLAKAYVVVNDSCYHQLMSHWLNTHAVIEPFVIATNRQLSVVHPINKLLAPHYRDTMMNINALARDSLINANGLIERSFLPSKYAVEMSSAVYKYWVFTDQALPNDLIKRNMAVKDSSSPYGLRLLIEDYPYAVDGLEIWTAIKTWVQDYVSLYYATDNDIKNDSELQHWWKEVVEKGHGDLKDKPWWPKLQTFDELVEVCTIIIWTASALHAAVNFGQYPYGGLILNRPTLSRRLLPEEGTAEYDEMVKSSQKAYLRTITPKFQTLIDLSVIEILSRHASDEVYLGQRENPHWTSDSKALQAFQKFGNKLAEIEAKLTNKNNDPSLYHRVGPVQLPYTLLHPSSKEGLTFRGIPNSISI</sequence>
<feature type="chain" id="PRO_0000220713" description="Seed linoleate 9S-lipoxygenase-2">
    <location>
        <begin position="1"/>
        <end position="864"/>
    </location>
</feature>
<feature type="domain" description="PLAT" evidence="1">
    <location>
        <begin position="46"/>
        <end position="171"/>
    </location>
</feature>
<feature type="domain" description="Lipoxygenase" evidence="2">
    <location>
        <begin position="174"/>
        <end position="864"/>
    </location>
</feature>
<feature type="region of interest" description="Disordered" evidence="3">
    <location>
        <begin position="230"/>
        <end position="264"/>
    </location>
</feature>
<feature type="compositionally biased region" description="Basic and acidic residues" evidence="3">
    <location>
        <begin position="251"/>
        <end position="264"/>
    </location>
</feature>
<feature type="binding site" evidence="2">
    <location>
        <position position="524"/>
    </location>
    <ligand>
        <name>Fe cation</name>
        <dbReference type="ChEBI" id="CHEBI:24875"/>
        <note>catalytic</note>
    </ligand>
</feature>
<feature type="binding site" evidence="2">
    <location>
        <position position="529"/>
    </location>
    <ligand>
        <name>Fe cation</name>
        <dbReference type="ChEBI" id="CHEBI:24875"/>
        <note>catalytic</note>
    </ligand>
</feature>
<feature type="binding site" evidence="2">
    <location>
        <position position="716"/>
    </location>
    <ligand>
        <name>Fe cation</name>
        <dbReference type="ChEBI" id="CHEBI:24875"/>
        <note>catalytic</note>
    </ligand>
</feature>
<feature type="binding site" evidence="2">
    <location>
        <position position="720"/>
    </location>
    <ligand>
        <name>Fe cation</name>
        <dbReference type="ChEBI" id="CHEBI:24875"/>
        <note>catalytic</note>
    </ligand>
</feature>
<feature type="binding site" evidence="2">
    <location>
        <position position="864"/>
    </location>
    <ligand>
        <name>Fe cation</name>
        <dbReference type="ChEBI" id="CHEBI:24875"/>
        <note>catalytic</note>
    </ligand>
</feature>
<feature type="sequence conflict" description="In Ref. 2; CAA55318." evidence="4" ref="2">
    <original>L</original>
    <variation>I</variation>
    <location>
        <position position="333"/>
    </location>
</feature>
<feature type="sequence conflict" description="In Ref. 2; CAA55318." evidence="4" ref="2">
    <location>
        <position position="562"/>
    </location>
</feature>
<feature type="sequence conflict" description="In Ref. 2; CAA55318." evidence="4" ref="2">
    <original>L</original>
    <variation>I</variation>
    <location>
        <position position="578"/>
    </location>
</feature>
<reference key="1">
    <citation type="journal article" date="1989" name="Biochem. J.">
        <title>The cDNA cloning of a pea (Pisum sativum) seed lipoxygenase. Sequence comparisons of the two major pea seed lipoxygenase isoforms.</title>
        <authorList>
            <person name="Ealing P.M."/>
            <person name="Casey R."/>
        </authorList>
    </citation>
    <scope>NUCLEOTIDE SEQUENCE [MRNA]</scope>
    <source>
        <strain>cv. Birte</strain>
    </source>
</reference>
<reference key="2">
    <citation type="submission" date="1994-04" db="EMBL/GenBank/DDBJ databases">
        <authorList>
            <person name="Casey R."/>
        </authorList>
    </citation>
    <scope>NUCLEOTIDE SEQUENCE [GENOMIC DNA]</scope>
    <source>
        <strain>cv. Birte</strain>
    </source>
</reference>